<proteinExistence type="inferred from homology"/>
<reference key="1">
    <citation type="journal article" date="2006" name="BMC Genomics">
        <title>The genome of the square archaeon Haloquadratum walsbyi: life at the limits of water activity.</title>
        <authorList>
            <person name="Bolhuis H."/>
            <person name="Palm P."/>
            <person name="Wende A."/>
            <person name="Falb M."/>
            <person name="Rampp M."/>
            <person name="Rodriguez-Valera F."/>
            <person name="Pfeiffer F."/>
            <person name="Oesterhelt D."/>
        </authorList>
    </citation>
    <scope>NUCLEOTIDE SEQUENCE [LARGE SCALE GENOMIC DNA]</scope>
    <source>
        <strain>DSM 16790 / HBSQ001</strain>
    </source>
</reference>
<accession>Q18EA0</accession>
<name>TRM1_HALWD</name>
<feature type="chain" id="PRO_0000259373" description="tRNA (guanine(26)-N(2))-dimethyltransferase">
    <location>
        <begin position="1"/>
        <end position="385"/>
    </location>
</feature>
<feature type="domain" description="Trm1 methyltransferase" evidence="1">
    <location>
        <begin position="1"/>
        <end position="379"/>
    </location>
</feature>
<feature type="binding site" evidence="1">
    <location>
        <position position="37"/>
    </location>
    <ligand>
        <name>S-adenosyl-L-methionine</name>
        <dbReference type="ChEBI" id="CHEBI:59789"/>
    </ligand>
</feature>
<feature type="binding site" evidence="1">
    <location>
        <position position="67"/>
    </location>
    <ligand>
        <name>S-adenosyl-L-methionine</name>
        <dbReference type="ChEBI" id="CHEBI:59789"/>
    </ligand>
</feature>
<feature type="binding site" evidence="1">
    <location>
        <position position="82"/>
    </location>
    <ligand>
        <name>S-adenosyl-L-methionine</name>
        <dbReference type="ChEBI" id="CHEBI:59789"/>
    </ligand>
</feature>
<feature type="binding site" evidence="1">
    <location>
        <position position="108"/>
    </location>
    <ligand>
        <name>S-adenosyl-L-methionine</name>
        <dbReference type="ChEBI" id="CHEBI:59789"/>
    </ligand>
</feature>
<feature type="binding site" evidence="1">
    <location>
        <position position="109"/>
    </location>
    <ligand>
        <name>S-adenosyl-L-methionine</name>
        <dbReference type="ChEBI" id="CHEBI:59789"/>
    </ligand>
</feature>
<feature type="binding site" evidence="1">
    <location>
        <position position="247"/>
    </location>
    <ligand>
        <name>Zn(2+)</name>
        <dbReference type="ChEBI" id="CHEBI:29105"/>
    </ligand>
</feature>
<feature type="binding site" evidence="1">
    <location>
        <position position="250"/>
    </location>
    <ligand>
        <name>Zn(2+)</name>
        <dbReference type="ChEBI" id="CHEBI:29105"/>
    </ligand>
</feature>
<feature type="binding site" evidence="1">
    <location>
        <position position="267"/>
    </location>
    <ligand>
        <name>Zn(2+)</name>
        <dbReference type="ChEBI" id="CHEBI:29105"/>
    </ligand>
</feature>
<feature type="binding site" evidence="1">
    <location>
        <position position="270"/>
    </location>
    <ligand>
        <name>Zn(2+)</name>
        <dbReference type="ChEBI" id="CHEBI:29105"/>
    </ligand>
</feature>
<sequence length="385" mass="42328">MNITEGVVELTVPAARDGADAGVGDDVFYNPTQELNRDITVAALRAYQEREPRAETYLDAMTASGVRGVRAAASGYDVTCTDIDPDAVALAQSNLEKNDLDGQTLPSDANAVLHQSGPESPLGPEAIFDVVDLDPFGTPIPFADAAFANARNLVCVTATDTAPLCGAHQQSGIRTYSTLPRNTEYHPEMGLRVLLSALIRTAARYDTAAIPILSHVTRHYVRTYLELDTRATRADELLSDLGYVYHCEDCLTRQHEFGHIAHPPSMCHHCEGNRVITAGPLYLGSIREQGFTRRVRNHITTEMGEIKQADSILKMVENELETPTHYDQHRLCKKWTRSAIGMDEFIEQLHTAGFDATRTHYSGTAFKTNATIAEIRSATTDPDEQ</sequence>
<organism>
    <name type="scientific">Haloquadratum walsbyi (strain DSM 16790 / HBSQ001)</name>
    <dbReference type="NCBI Taxonomy" id="362976"/>
    <lineage>
        <taxon>Archaea</taxon>
        <taxon>Methanobacteriati</taxon>
        <taxon>Methanobacteriota</taxon>
        <taxon>Stenosarchaea group</taxon>
        <taxon>Halobacteria</taxon>
        <taxon>Halobacteriales</taxon>
        <taxon>Haloferacaceae</taxon>
        <taxon>Haloquadratum</taxon>
    </lineage>
</organism>
<keyword id="KW-0479">Metal-binding</keyword>
<keyword id="KW-0489">Methyltransferase</keyword>
<keyword id="KW-1185">Reference proteome</keyword>
<keyword id="KW-0694">RNA-binding</keyword>
<keyword id="KW-0949">S-adenosyl-L-methionine</keyword>
<keyword id="KW-0808">Transferase</keyword>
<keyword id="KW-0819">tRNA processing</keyword>
<keyword id="KW-0820">tRNA-binding</keyword>
<keyword id="KW-0862">Zinc</keyword>
<gene>
    <name evidence="1" type="primary">trm1</name>
    <name type="ordered locus">HQ_3646A</name>
</gene>
<dbReference type="EC" id="2.1.1.216" evidence="1"/>
<dbReference type="EMBL" id="AM180088">
    <property type="protein sequence ID" value="CAJ53733.1"/>
    <property type="molecule type" value="Genomic_DNA"/>
</dbReference>
<dbReference type="RefSeq" id="WP_011572815.1">
    <property type="nucleotide sequence ID" value="NC_008212.1"/>
</dbReference>
<dbReference type="SMR" id="Q18EA0"/>
<dbReference type="STRING" id="362976.HQ_3646A"/>
<dbReference type="GeneID" id="4194804"/>
<dbReference type="KEGG" id="hwa:HQ_3646A"/>
<dbReference type="eggNOG" id="arCOG01219">
    <property type="taxonomic scope" value="Archaea"/>
</dbReference>
<dbReference type="HOGENOM" id="CLU_010862_5_1_2"/>
<dbReference type="Proteomes" id="UP000001975">
    <property type="component" value="Chromosome"/>
</dbReference>
<dbReference type="GO" id="GO:0160104">
    <property type="term" value="F:tRNA (guanine(26)-N2)-dimethyltransferase activity"/>
    <property type="evidence" value="ECO:0007669"/>
    <property type="project" value="UniProtKB-UniRule"/>
</dbReference>
<dbReference type="GO" id="GO:0000049">
    <property type="term" value="F:tRNA binding"/>
    <property type="evidence" value="ECO:0007669"/>
    <property type="project" value="UniProtKB-KW"/>
</dbReference>
<dbReference type="GO" id="GO:0002940">
    <property type="term" value="P:tRNA N2-guanine methylation"/>
    <property type="evidence" value="ECO:0007669"/>
    <property type="project" value="TreeGrafter"/>
</dbReference>
<dbReference type="CDD" id="cd02440">
    <property type="entry name" value="AdoMet_MTases"/>
    <property type="match status" value="1"/>
</dbReference>
<dbReference type="Gene3D" id="3.30.56.70">
    <property type="entry name" value="N2,N2-dimethylguanosine tRNA methyltransferase, C-terminal domain"/>
    <property type="match status" value="1"/>
</dbReference>
<dbReference type="Gene3D" id="3.40.50.150">
    <property type="entry name" value="Vaccinia Virus protein VP39"/>
    <property type="match status" value="1"/>
</dbReference>
<dbReference type="HAMAP" id="MF_00290">
    <property type="entry name" value="tRNA_dimethyltr_TRM1"/>
    <property type="match status" value="1"/>
</dbReference>
<dbReference type="InterPro" id="IPR029063">
    <property type="entry name" value="SAM-dependent_MTases_sf"/>
</dbReference>
<dbReference type="InterPro" id="IPR002905">
    <property type="entry name" value="Trm1"/>
</dbReference>
<dbReference type="InterPro" id="IPR022923">
    <property type="entry name" value="TRM1_arc_bac"/>
</dbReference>
<dbReference type="InterPro" id="IPR042296">
    <property type="entry name" value="tRNA_met_Trm1_C"/>
</dbReference>
<dbReference type="NCBIfam" id="NF003327">
    <property type="entry name" value="PRK04338.1-1"/>
    <property type="match status" value="1"/>
</dbReference>
<dbReference type="NCBIfam" id="TIGR00308">
    <property type="entry name" value="TRM1"/>
    <property type="match status" value="1"/>
</dbReference>
<dbReference type="PANTHER" id="PTHR10631">
    <property type="entry name" value="N 2 ,N 2 -DIMETHYLGUANOSINE TRNA METHYLTRANSFERASE"/>
    <property type="match status" value="1"/>
</dbReference>
<dbReference type="PANTHER" id="PTHR10631:SF3">
    <property type="entry name" value="TRNA (GUANINE(26)-N(2))-DIMETHYLTRANSFERASE"/>
    <property type="match status" value="1"/>
</dbReference>
<dbReference type="Pfam" id="PF02005">
    <property type="entry name" value="TRM"/>
    <property type="match status" value="1"/>
</dbReference>
<dbReference type="SUPFAM" id="SSF53335">
    <property type="entry name" value="S-adenosyl-L-methionine-dependent methyltransferases"/>
    <property type="match status" value="1"/>
</dbReference>
<dbReference type="PROSITE" id="PS51626">
    <property type="entry name" value="SAM_MT_TRM1"/>
    <property type="match status" value="1"/>
</dbReference>
<evidence type="ECO:0000255" key="1">
    <source>
        <dbReference type="HAMAP-Rule" id="MF_00290"/>
    </source>
</evidence>
<comment type="function">
    <text evidence="1">Dimethylates a single guanine residue at position 26 of a number of tRNAs using S-adenosyl-L-methionine as donor of the methyl groups.</text>
</comment>
<comment type="catalytic activity">
    <reaction evidence="1">
        <text>guanosine(26) in tRNA + 2 S-adenosyl-L-methionine = N(2)-dimethylguanosine(26) in tRNA + 2 S-adenosyl-L-homocysteine + 2 H(+)</text>
        <dbReference type="Rhea" id="RHEA:43140"/>
        <dbReference type="Rhea" id="RHEA-COMP:10359"/>
        <dbReference type="Rhea" id="RHEA-COMP:10360"/>
        <dbReference type="ChEBI" id="CHEBI:15378"/>
        <dbReference type="ChEBI" id="CHEBI:57856"/>
        <dbReference type="ChEBI" id="CHEBI:59789"/>
        <dbReference type="ChEBI" id="CHEBI:74269"/>
        <dbReference type="ChEBI" id="CHEBI:74513"/>
        <dbReference type="EC" id="2.1.1.216"/>
    </reaction>
</comment>
<comment type="similarity">
    <text evidence="1">Belongs to the class I-like SAM-binding methyltransferase superfamily. Trm1 family.</text>
</comment>
<protein>
    <recommendedName>
        <fullName evidence="1">tRNA (guanine(26)-N(2))-dimethyltransferase</fullName>
        <ecNumber evidence="1">2.1.1.216</ecNumber>
    </recommendedName>
    <alternativeName>
        <fullName evidence="1">tRNA 2,2-dimethylguanosine-26 methyltransferase</fullName>
    </alternativeName>
    <alternativeName>
        <fullName evidence="1">tRNA(guanine-26,N(2)-N(2)) methyltransferase</fullName>
    </alternativeName>
    <alternativeName>
        <fullName evidence="1">tRNA(m(2,2)G26)dimethyltransferase</fullName>
    </alternativeName>
</protein>